<reference key="1">
    <citation type="journal article" date="2003" name="Int. J. Dev. Biol.">
        <title>2P1, a novel male mouse cDNA specifically expressed during meiosis.</title>
        <authorList>
            <person name="Hammami-Hamza S."/>
            <person name="Doussau M."/>
            <person name="Allemand I."/>
            <person name="Segretain D."/>
            <person name="Gasc J.-M."/>
            <person name="Finaz C."/>
        </authorList>
    </citation>
    <scope>NUCLEOTIDE SEQUENCE [MRNA]</scope>
    <scope>TISSUE SPECIFICITY</scope>
    <source>
        <tissue>Testis</tissue>
    </source>
</reference>
<reference key="2">
    <citation type="journal article" date="2005" name="Science">
        <title>The transcriptional landscape of the mammalian genome.</title>
        <authorList>
            <person name="Carninci P."/>
            <person name="Kasukawa T."/>
            <person name="Katayama S."/>
            <person name="Gough J."/>
            <person name="Frith M.C."/>
            <person name="Maeda N."/>
            <person name="Oyama R."/>
            <person name="Ravasi T."/>
            <person name="Lenhard B."/>
            <person name="Wells C."/>
            <person name="Kodzius R."/>
            <person name="Shimokawa K."/>
            <person name="Bajic V.B."/>
            <person name="Brenner S.E."/>
            <person name="Batalov S."/>
            <person name="Forrest A.R."/>
            <person name="Zavolan M."/>
            <person name="Davis M.J."/>
            <person name="Wilming L.G."/>
            <person name="Aidinis V."/>
            <person name="Allen J.E."/>
            <person name="Ambesi-Impiombato A."/>
            <person name="Apweiler R."/>
            <person name="Aturaliya R.N."/>
            <person name="Bailey T.L."/>
            <person name="Bansal M."/>
            <person name="Baxter L."/>
            <person name="Beisel K.W."/>
            <person name="Bersano T."/>
            <person name="Bono H."/>
            <person name="Chalk A.M."/>
            <person name="Chiu K.P."/>
            <person name="Choudhary V."/>
            <person name="Christoffels A."/>
            <person name="Clutterbuck D.R."/>
            <person name="Crowe M.L."/>
            <person name="Dalla E."/>
            <person name="Dalrymple B.P."/>
            <person name="de Bono B."/>
            <person name="Della Gatta G."/>
            <person name="di Bernardo D."/>
            <person name="Down T."/>
            <person name="Engstrom P."/>
            <person name="Fagiolini M."/>
            <person name="Faulkner G."/>
            <person name="Fletcher C.F."/>
            <person name="Fukushima T."/>
            <person name="Furuno M."/>
            <person name="Futaki S."/>
            <person name="Gariboldi M."/>
            <person name="Georgii-Hemming P."/>
            <person name="Gingeras T.R."/>
            <person name="Gojobori T."/>
            <person name="Green R.E."/>
            <person name="Gustincich S."/>
            <person name="Harbers M."/>
            <person name="Hayashi Y."/>
            <person name="Hensch T.K."/>
            <person name="Hirokawa N."/>
            <person name="Hill D."/>
            <person name="Huminiecki L."/>
            <person name="Iacono M."/>
            <person name="Ikeo K."/>
            <person name="Iwama A."/>
            <person name="Ishikawa T."/>
            <person name="Jakt M."/>
            <person name="Kanapin A."/>
            <person name="Katoh M."/>
            <person name="Kawasawa Y."/>
            <person name="Kelso J."/>
            <person name="Kitamura H."/>
            <person name="Kitano H."/>
            <person name="Kollias G."/>
            <person name="Krishnan S.P."/>
            <person name="Kruger A."/>
            <person name="Kummerfeld S.K."/>
            <person name="Kurochkin I.V."/>
            <person name="Lareau L.F."/>
            <person name="Lazarevic D."/>
            <person name="Lipovich L."/>
            <person name="Liu J."/>
            <person name="Liuni S."/>
            <person name="McWilliam S."/>
            <person name="Madan Babu M."/>
            <person name="Madera M."/>
            <person name="Marchionni L."/>
            <person name="Matsuda H."/>
            <person name="Matsuzawa S."/>
            <person name="Miki H."/>
            <person name="Mignone F."/>
            <person name="Miyake S."/>
            <person name="Morris K."/>
            <person name="Mottagui-Tabar S."/>
            <person name="Mulder N."/>
            <person name="Nakano N."/>
            <person name="Nakauchi H."/>
            <person name="Ng P."/>
            <person name="Nilsson R."/>
            <person name="Nishiguchi S."/>
            <person name="Nishikawa S."/>
            <person name="Nori F."/>
            <person name="Ohara O."/>
            <person name="Okazaki Y."/>
            <person name="Orlando V."/>
            <person name="Pang K.C."/>
            <person name="Pavan W.J."/>
            <person name="Pavesi G."/>
            <person name="Pesole G."/>
            <person name="Petrovsky N."/>
            <person name="Piazza S."/>
            <person name="Reed J."/>
            <person name="Reid J.F."/>
            <person name="Ring B.Z."/>
            <person name="Ringwald M."/>
            <person name="Rost B."/>
            <person name="Ruan Y."/>
            <person name="Salzberg S.L."/>
            <person name="Sandelin A."/>
            <person name="Schneider C."/>
            <person name="Schoenbach C."/>
            <person name="Sekiguchi K."/>
            <person name="Semple C.A."/>
            <person name="Seno S."/>
            <person name="Sessa L."/>
            <person name="Sheng Y."/>
            <person name="Shibata Y."/>
            <person name="Shimada H."/>
            <person name="Shimada K."/>
            <person name="Silva D."/>
            <person name="Sinclair B."/>
            <person name="Sperling S."/>
            <person name="Stupka E."/>
            <person name="Sugiura K."/>
            <person name="Sultana R."/>
            <person name="Takenaka Y."/>
            <person name="Taki K."/>
            <person name="Tammoja K."/>
            <person name="Tan S.L."/>
            <person name="Tang S."/>
            <person name="Taylor M.S."/>
            <person name="Tegner J."/>
            <person name="Teichmann S.A."/>
            <person name="Ueda H.R."/>
            <person name="van Nimwegen E."/>
            <person name="Verardo R."/>
            <person name="Wei C.L."/>
            <person name="Yagi K."/>
            <person name="Yamanishi H."/>
            <person name="Zabarovsky E."/>
            <person name="Zhu S."/>
            <person name="Zimmer A."/>
            <person name="Hide W."/>
            <person name="Bult C."/>
            <person name="Grimmond S.M."/>
            <person name="Teasdale R.D."/>
            <person name="Liu E.T."/>
            <person name="Brusic V."/>
            <person name="Quackenbush J."/>
            <person name="Wahlestedt C."/>
            <person name="Mattick J.S."/>
            <person name="Hume D.A."/>
            <person name="Kai C."/>
            <person name="Sasaki D."/>
            <person name="Tomaru Y."/>
            <person name="Fukuda S."/>
            <person name="Kanamori-Katayama M."/>
            <person name="Suzuki M."/>
            <person name="Aoki J."/>
            <person name="Arakawa T."/>
            <person name="Iida J."/>
            <person name="Imamura K."/>
            <person name="Itoh M."/>
            <person name="Kato T."/>
            <person name="Kawaji H."/>
            <person name="Kawagashira N."/>
            <person name="Kawashima T."/>
            <person name="Kojima M."/>
            <person name="Kondo S."/>
            <person name="Konno H."/>
            <person name="Nakano K."/>
            <person name="Ninomiya N."/>
            <person name="Nishio T."/>
            <person name="Okada M."/>
            <person name="Plessy C."/>
            <person name="Shibata K."/>
            <person name="Shiraki T."/>
            <person name="Suzuki S."/>
            <person name="Tagami M."/>
            <person name="Waki K."/>
            <person name="Watahiki A."/>
            <person name="Okamura-Oho Y."/>
            <person name="Suzuki H."/>
            <person name="Kawai J."/>
            <person name="Hayashizaki Y."/>
        </authorList>
    </citation>
    <scope>NUCLEOTIDE SEQUENCE [LARGE SCALE MRNA]</scope>
    <source>
        <strain>C57BL/6J</strain>
        <tissue>Cerebellum</tissue>
        <tissue>Skin</tissue>
    </source>
</reference>
<reference key="3">
    <citation type="journal article" date="2004" name="Genome Res.">
        <title>The status, quality, and expansion of the NIH full-length cDNA project: the Mammalian Gene Collection (MGC).</title>
        <authorList>
            <consortium name="The MGC Project Team"/>
        </authorList>
    </citation>
    <scope>NUCLEOTIDE SEQUENCE [LARGE SCALE MRNA]</scope>
    <source>
        <strain>Czech II</strain>
        <tissue>Lung</tissue>
    </source>
</reference>
<reference key="4">
    <citation type="journal article" date="2010" name="Cell">
        <title>A tissue-specific atlas of mouse protein phosphorylation and expression.</title>
        <authorList>
            <person name="Huttlin E.L."/>
            <person name="Jedrychowski M.P."/>
            <person name="Elias J.E."/>
            <person name="Goswami T."/>
            <person name="Rad R."/>
            <person name="Beausoleil S.A."/>
            <person name="Villen J."/>
            <person name="Haas W."/>
            <person name="Sowa M.E."/>
            <person name="Gygi S.P."/>
        </authorList>
    </citation>
    <scope>IDENTIFICATION BY MASS SPECTROMETRY [LARGE SCALE ANALYSIS]</scope>
    <source>
        <tissue>Brain</tissue>
        <tissue>Brown adipose tissue</tissue>
        <tissue>Heart</tissue>
        <tissue>Kidney</tissue>
        <tissue>Liver</tissue>
        <tissue>Lung</tissue>
        <tissue>Pancreas</tissue>
        <tissue>Testis</tissue>
    </source>
</reference>
<evidence type="ECO:0000250" key="1"/>
<evidence type="ECO:0000269" key="2">
    <source>
    </source>
</evidence>
<evidence type="ECO:0000305" key="3"/>
<gene>
    <name type="primary">Ndufaf3</name>
</gene>
<protein>
    <recommendedName>
        <fullName>NADH dehydrogenase [ubiquinone] 1 alpha subcomplex assembly factor 3</fullName>
    </recommendedName>
    <alternativeName>
        <fullName>Protein 2P1</fullName>
    </alternativeName>
</protein>
<organism>
    <name type="scientific">Mus musculus</name>
    <name type="common">Mouse</name>
    <dbReference type="NCBI Taxonomy" id="10090"/>
    <lineage>
        <taxon>Eukaryota</taxon>
        <taxon>Metazoa</taxon>
        <taxon>Chordata</taxon>
        <taxon>Craniata</taxon>
        <taxon>Vertebrata</taxon>
        <taxon>Euteleostomi</taxon>
        <taxon>Mammalia</taxon>
        <taxon>Eutheria</taxon>
        <taxon>Euarchontoglires</taxon>
        <taxon>Glires</taxon>
        <taxon>Rodentia</taxon>
        <taxon>Myomorpha</taxon>
        <taxon>Muroidea</taxon>
        <taxon>Muridae</taxon>
        <taxon>Murinae</taxon>
        <taxon>Mus</taxon>
        <taxon>Mus</taxon>
    </lineage>
</organism>
<proteinExistence type="evidence at protein level"/>
<dbReference type="EMBL" id="AF235017">
    <property type="protein sequence ID" value="AAF61723.1"/>
    <property type="molecule type" value="mRNA"/>
</dbReference>
<dbReference type="EMBL" id="AK005252">
    <property type="protein sequence ID" value="BAB23907.1"/>
    <property type="molecule type" value="mRNA"/>
</dbReference>
<dbReference type="EMBL" id="AK014634">
    <property type="protein sequence ID" value="BAB29477.1"/>
    <property type="molecule type" value="mRNA"/>
</dbReference>
<dbReference type="EMBL" id="BC027513">
    <property type="protein sequence ID" value="AAH27513.1"/>
    <property type="molecule type" value="mRNA"/>
</dbReference>
<dbReference type="CCDS" id="CCDS23531.1"/>
<dbReference type="RefSeq" id="NP_075736.1">
    <property type="nucleotide sequence ID" value="NM_023247.2"/>
</dbReference>
<dbReference type="SMR" id="Q9JKL4"/>
<dbReference type="BioGRID" id="211659">
    <property type="interactions" value="5"/>
</dbReference>
<dbReference type="FunCoup" id="Q9JKL4">
    <property type="interactions" value="2536"/>
</dbReference>
<dbReference type="IntAct" id="Q9JKL4">
    <property type="interactions" value="1"/>
</dbReference>
<dbReference type="MINT" id="Q9JKL4"/>
<dbReference type="STRING" id="10090.ENSMUSP00000073832"/>
<dbReference type="PhosphoSitePlus" id="Q9JKL4"/>
<dbReference type="SwissPalm" id="Q9JKL4"/>
<dbReference type="jPOST" id="Q9JKL4"/>
<dbReference type="PaxDb" id="10090-ENSMUSP00000073832"/>
<dbReference type="PeptideAtlas" id="Q9JKL4"/>
<dbReference type="ProteomicsDB" id="252869"/>
<dbReference type="Pumba" id="Q9JKL4"/>
<dbReference type="Antibodypedia" id="48697">
    <property type="antibodies" value="69 antibodies from 15 providers"/>
</dbReference>
<dbReference type="Ensembl" id="ENSMUST00000074208.6">
    <property type="protein sequence ID" value="ENSMUSP00000073832.5"/>
    <property type="gene ID" value="ENSMUSG00000070283.5"/>
</dbReference>
<dbReference type="GeneID" id="66706"/>
<dbReference type="KEGG" id="mmu:66706"/>
<dbReference type="UCSC" id="uc009rqh.1">
    <property type="organism name" value="mouse"/>
</dbReference>
<dbReference type="AGR" id="MGI:1913956"/>
<dbReference type="CTD" id="25915"/>
<dbReference type="MGI" id="MGI:1913956">
    <property type="gene designation" value="Ndufaf3"/>
</dbReference>
<dbReference type="VEuPathDB" id="HostDB:ENSMUSG00000070283"/>
<dbReference type="eggNOG" id="KOG3363">
    <property type="taxonomic scope" value="Eukaryota"/>
</dbReference>
<dbReference type="GeneTree" id="ENSGT00390000018312"/>
<dbReference type="HOGENOM" id="CLU_074390_3_1_1"/>
<dbReference type="InParanoid" id="Q9JKL4"/>
<dbReference type="OMA" id="FSKAYDH"/>
<dbReference type="OrthoDB" id="20681at2759"/>
<dbReference type="PhylomeDB" id="Q9JKL4"/>
<dbReference type="TreeFam" id="TF321072"/>
<dbReference type="Reactome" id="R-MMU-6799198">
    <property type="pathway name" value="Complex I biogenesis"/>
</dbReference>
<dbReference type="BioGRID-ORCS" id="66706">
    <property type="hits" value="19 hits in 61 CRISPR screens"/>
</dbReference>
<dbReference type="ChiTaRS" id="Ndufaf3">
    <property type="organism name" value="mouse"/>
</dbReference>
<dbReference type="PRO" id="PR:Q9JKL4"/>
<dbReference type="Proteomes" id="UP000000589">
    <property type="component" value="Chromosome 9"/>
</dbReference>
<dbReference type="RNAct" id="Q9JKL4">
    <property type="molecule type" value="protein"/>
</dbReference>
<dbReference type="Bgee" id="ENSMUSG00000070283">
    <property type="expression patterns" value="Expressed in heart left ventricle and 77 other cell types or tissues"/>
</dbReference>
<dbReference type="ExpressionAtlas" id="Q9JKL4">
    <property type="expression patterns" value="baseline and differential"/>
</dbReference>
<dbReference type="GO" id="GO:0005743">
    <property type="term" value="C:mitochondrial inner membrane"/>
    <property type="evidence" value="ECO:0007669"/>
    <property type="project" value="UniProtKB-SubCell"/>
</dbReference>
<dbReference type="GO" id="GO:0005739">
    <property type="term" value="C:mitochondrion"/>
    <property type="evidence" value="ECO:0007005"/>
    <property type="project" value="MGI"/>
</dbReference>
<dbReference type="GO" id="GO:0005634">
    <property type="term" value="C:nucleus"/>
    <property type="evidence" value="ECO:0007669"/>
    <property type="project" value="UniProtKB-SubCell"/>
</dbReference>
<dbReference type="GO" id="GO:0032981">
    <property type="term" value="P:mitochondrial respiratory chain complex I assembly"/>
    <property type="evidence" value="ECO:0007669"/>
    <property type="project" value="Ensembl"/>
</dbReference>
<dbReference type="CDD" id="cd05125">
    <property type="entry name" value="Mth938_2P1-like"/>
    <property type="match status" value="1"/>
</dbReference>
<dbReference type="FunFam" id="3.40.1230.10:FF:000002">
    <property type="entry name" value="NADH dehydrogenase [ubiquinone] 1 alpha subcomplex assembly factor 3"/>
    <property type="match status" value="1"/>
</dbReference>
<dbReference type="Gene3D" id="3.40.1230.10">
    <property type="entry name" value="MTH938-like"/>
    <property type="match status" value="1"/>
</dbReference>
<dbReference type="InterPro" id="IPR036748">
    <property type="entry name" value="MTH938-like_sf"/>
</dbReference>
<dbReference type="InterPro" id="IPR034095">
    <property type="entry name" value="NDUF3"/>
</dbReference>
<dbReference type="InterPro" id="IPR007523">
    <property type="entry name" value="NDUFAF3/AAMDC"/>
</dbReference>
<dbReference type="PANTHER" id="PTHR21192:SF2">
    <property type="entry name" value="NADH DEHYDROGENASE [UBIQUINONE] 1 ALPHA SUBCOMPLEX ASSEMBLY FACTOR 3"/>
    <property type="match status" value="1"/>
</dbReference>
<dbReference type="PANTHER" id="PTHR21192">
    <property type="entry name" value="NUCLEAR PROTEIN E3-3"/>
    <property type="match status" value="1"/>
</dbReference>
<dbReference type="Pfam" id="PF04430">
    <property type="entry name" value="DUF498"/>
    <property type="match status" value="1"/>
</dbReference>
<dbReference type="SUPFAM" id="SSF64076">
    <property type="entry name" value="MTH938-like"/>
    <property type="match status" value="1"/>
</dbReference>
<comment type="function">
    <text evidence="1">Essential factor for the assembly of mitochondrial NADH:ubiquinone oxidoreductase complex (complex I).</text>
</comment>
<comment type="subunit">
    <text evidence="1">Interacts with NDUFAF4, NDUFS2 and NDUFS3.</text>
</comment>
<comment type="subcellular location">
    <subcellularLocation>
        <location evidence="1">Nucleus</location>
    </subcellularLocation>
    <subcellularLocation>
        <location evidence="1">Mitochondrion inner membrane</location>
    </subcellularLocation>
</comment>
<comment type="tissue specificity">
    <text evidence="2">Strongly expressed in testis and weakly expressed in the epididymis. Expressed in spermatocytes.</text>
</comment>
<comment type="similarity">
    <text evidence="3">Belongs to the NDUFAF3 family.</text>
</comment>
<name>NDUF3_MOUSE</name>
<keyword id="KW-0472">Membrane</keyword>
<keyword id="KW-0496">Mitochondrion</keyword>
<keyword id="KW-0999">Mitochondrion inner membrane</keyword>
<keyword id="KW-0539">Nucleus</keyword>
<keyword id="KW-1185">Reference proteome</keyword>
<feature type="chain" id="PRO_0000281155" description="NADH dehydrogenase [ubiquinone] 1 alpha subcomplex assembly factor 3">
    <location>
        <begin position="1"/>
        <end position="185"/>
    </location>
</feature>
<feature type="sequence conflict" description="In Ref. 3; AAH27513." evidence="3" ref="3">
    <original>Q</original>
    <variation>H</variation>
    <location>
        <position position="89"/>
    </location>
</feature>
<sequence>MATALGFRCLFRTRPAPLCRHVDRLWRNPRRGHRLSPADDELYQRTRISLLQSEFPQAVYIDSYSSRGFTICGNRVFGPCVLLPQTVVQWNVGSHQDITEESFSLFWMLEPRIEIVVVGTGNKTERLHPQVLQAMRQRGIAVEVQDTPNACATFNFLCHEGRVTGAALIPPPGETALASLGQASE</sequence>
<accession>Q9JKL4</accession>
<accession>Q8K1A3</accession>